<dbReference type="EMBL" id="AE014075">
    <property type="protein sequence ID" value="AAN80661.1"/>
    <property type="molecule type" value="Genomic_DNA"/>
</dbReference>
<dbReference type="RefSeq" id="WP_000513737.1">
    <property type="nucleotide sequence ID" value="NZ_CP051263.1"/>
</dbReference>
<dbReference type="BMRB" id="P64497"/>
<dbReference type="SMR" id="P64497"/>
<dbReference type="STRING" id="199310.c2202"/>
<dbReference type="KEGG" id="ecc:c2202"/>
<dbReference type="eggNOG" id="ENOG5032979">
    <property type="taxonomic scope" value="Bacteria"/>
</dbReference>
<dbReference type="HOGENOM" id="CLU_211215_0_0_6"/>
<dbReference type="BioCyc" id="ECOL199310:C2202-MONOMER"/>
<dbReference type="Proteomes" id="UP000001410">
    <property type="component" value="Chromosome"/>
</dbReference>
<dbReference type="Gene3D" id="3.30.160.220">
    <property type="entry name" value="YoaG"/>
    <property type="match status" value="1"/>
</dbReference>
<dbReference type="InterPro" id="IPR015051">
    <property type="entry name" value="YoaG"/>
</dbReference>
<dbReference type="InterPro" id="IPR036489">
    <property type="entry name" value="YoaG_sf"/>
</dbReference>
<dbReference type="Pfam" id="PF08956">
    <property type="entry name" value="DUF1869"/>
    <property type="match status" value="1"/>
</dbReference>
<dbReference type="SUPFAM" id="SSF103063">
    <property type="entry name" value="Hypothetical protein YoaG"/>
    <property type="match status" value="1"/>
</dbReference>
<accession>P64497</accession>
<accession>P76247</accession>
<organism>
    <name type="scientific">Escherichia coli O6:H1 (strain CFT073 / ATCC 700928 / UPEC)</name>
    <dbReference type="NCBI Taxonomy" id="199310"/>
    <lineage>
        <taxon>Bacteria</taxon>
        <taxon>Pseudomonadati</taxon>
        <taxon>Pseudomonadota</taxon>
        <taxon>Gammaproteobacteria</taxon>
        <taxon>Enterobacterales</taxon>
        <taxon>Enterobacteriaceae</taxon>
        <taxon>Escherichia</taxon>
    </lineage>
</organism>
<feature type="chain" id="PRO_0000169039" description="Protein YoaG">
    <location>
        <begin position="1"/>
        <end position="60"/>
    </location>
</feature>
<name>YOAG_ECOL6</name>
<proteinExistence type="inferred from homology"/>
<evidence type="ECO:0000250" key="1"/>
<comment type="subunit">
    <text evidence="1">Homodimer.</text>
</comment>
<sequence length="60" mass="6608">MGKATYTVTVTNNSNGVSVDYETETPMTLLVPEVAAEVIKDLVNTVRSYDTENEHDVCGW</sequence>
<protein>
    <recommendedName>
        <fullName>Protein YoaG</fullName>
    </recommendedName>
</protein>
<gene>
    <name type="primary">yoaG</name>
    <name type="ordered locus">c2202</name>
</gene>
<keyword id="KW-1185">Reference proteome</keyword>
<reference key="1">
    <citation type="journal article" date="2002" name="Proc. Natl. Acad. Sci. U.S.A.">
        <title>Extensive mosaic structure revealed by the complete genome sequence of uropathogenic Escherichia coli.</title>
        <authorList>
            <person name="Welch R.A."/>
            <person name="Burland V."/>
            <person name="Plunkett G. III"/>
            <person name="Redford P."/>
            <person name="Roesch P."/>
            <person name="Rasko D."/>
            <person name="Buckles E.L."/>
            <person name="Liou S.-R."/>
            <person name="Boutin A."/>
            <person name="Hackett J."/>
            <person name="Stroud D."/>
            <person name="Mayhew G.F."/>
            <person name="Rose D.J."/>
            <person name="Zhou S."/>
            <person name="Schwartz D.C."/>
            <person name="Perna N.T."/>
            <person name="Mobley H.L.T."/>
            <person name="Donnenberg M.S."/>
            <person name="Blattner F.R."/>
        </authorList>
    </citation>
    <scope>NUCLEOTIDE SEQUENCE [LARGE SCALE GENOMIC DNA]</scope>
    <source>
        <strain>CFT073 / ATCC 700928 / UPEC</strain>
    </source>
</reference>